<reference key="1">
    <citation type="journal article" date="1988" name="J. Biochem.">
        <title>Cloning and expression of subtilisin amylosacchariticus gene.</title>
        <authorList>
            <person name="Yoshimoto T."/>
            <person name="Oyama H."/>
            <person name="Honda T."/>
            <person name="Tone H."/>
            <person name="Takeshita T."/>
            <person name="Kamiyama T."/>
            <person name="Tsuru D."/>
        </authorList>
    </citation>
    <scope>NUCLEOTIDE SEQUENCE [GENOMIC DNA]</scope>
</reference>
<reference key="2">
    <citation type="journal article" date="1972" name="J. Biol. Chem.">
        <title>Subtilisin Amylosacchariticus. II. Isolation and sequence of the tryptic and cyanogen bromide peptides.</title>
        <authorList>
            <person name="Markland F.S."/>
            <person name="Kurihara M."/>
            <person name="Smith E.L."/>
        </authorList>
    </citation>
    <scope>PARTIAL PROTEIN SEQUENCE</scope>
</reference>
<reference key="3">
    <citation type="journal article" date="1972" name="J. Biol. Chem.">
        <title>Subtilisin Amylosacchariticus. 3. Isolation and sequence of the chymotryptic peptides and the complete amino acid sequence.</title>
        <authorList>
            <person name="Kurihara M."/>
            <person name="Markland F.S."/>
            <person name="Smith E.L."/>
        </authorList>
    </citation>
    <scope>PROTEIN SEQUENCE OF 107-381</scope>
</reference>
<dbReference type="EC" id="3.4.21.62"/>
<dbReference type="EMBL" id="D00264">
    <property type="protein sequence ID" value="BAA00186.1"/>
    <property type="molecule type" value="Genomic_DNA"/>
</dbReference>
<dbReference type="PIR" id="A41448">
    <property type="entry name" value="SUBSS"/>
</dbReference>
<dbReference type="BMRB" id="P00783"/>
<dbReference type="SMR" id="P00783"/>
<dbReference type="MEROPS" id="S08.042"/>
<dbReference type="GO" id="GO:0005576">
    <property type="term" value="C:extracellular region"/>
    <property type="evidence" value="ECO:0007669"/>
    <property type="project" value="UniProtKB-SubCell"/>
</dbReference>
<dbReference type="GO" id="GO:0046872">
    <property type="term" value="F:metal ion binding"/>
    <property type="evidence" value="ECO:0007669"/>
    <property type="project" value="UniProtKB-KW"/>
</dbReference>
<dbReference type="GO" id="GO:0004252">
    <property type="term" value="F:serine-type endopeptidase activity"/>
    <property type="evidence" value="ECO:0007669"/>
    <property type="project" value="UniProtKB-EC"/>
</dbReference>
<dbReference type="GO" id="GO:0006508">
    <property type="term" value="P:proteolysis"/>
    <property type="evidence" value="ECO:0007669"/>
    <property type="project" value="UniProtKB-KW"/>
</dbReference>
<dbReference type="GO" id="GO:0030435">
    <property type="term" value="P:sporulation resulting in formation of a cellular spore"/>
    <property type="evidence" value="ECO:0007669"/>
    <property type="project" value="UniProtKB-KW"/>
</dbReference>
<dbReference type="CDD" id="cd07477">
    <property type="entry name" value="Peptidases_S8_Subtilisin_subset"/>
    <property type="match status" value="1"/>
</dbReference>
<dbReference type="FunFam" id="3.40.50.200:FF:000055">
    <property type="entry name" value="Tk-subtilisin"/>
    <property type="match status" value="1"/>
</dbReference>
<dbReference type="Gene3D" id="3.30.70.80">
    <property type="entry name" value="Peptidase S8 propeptide/proteinase inhibitor I9"/>
    <property type="match status" value="1"/>
</dbReference>
<dbReference type="Gene3D" id="3.40.50.200">
    <property type="entry name" value="Peptidase S8/S53 domain"/>
    <property type="match status" value="1"/>
</dbReference>
<dbReference type="InterPro" id="IPR000209">
    <property type="entry name" value="Peptidase_S8/S53_dom"/>
</dbReference>
<dbReference type="InterPro" id="IPR036852">
    <property type="entry name" value="Peptidase_S8/S53_dom_sf"/>
</dbReference>
<dbReference type="InterPro" id="IPR023827">
    <property type="entry name" value="Peptidase_S8_Asp-AS"/>
</dbReference>
<dbReference type="InterPro" id="IPR022398">
    <property type="entry name" value="Peptidase_S8_His-AS"/>
</dbReference>
<dbReference type="InterPro" id="IPR023828">
    <property type="entry name" value="Peptidase_S8_Ser-AS"/>
</dbReference>
<dbReference type="InterPro" id="IPR050131">
    <property type="entry name" value="Peptidase_S8_subtilisin-like"/>
</dbReference>
<dbReference type="InterPro" id="IPR015500">
    <property type="entry name" value="Peptidase_S8_subtilisin-rel"/>
</dbReference>
<dbReference type="InterPro" id="IPR010259">
    <property type="entry name" value="S8pro/Inhibitor_I9"/>
</dbReference>
<dbReference type="InterPro" id="IPR037045">
    <property type="entry name" value="S8pro/Inhibitor_I9_sf"/>
</dbReference>
<dbReference type="InterPro" id="IPR034202">
    <property type="entry name" value="Subtilisin_Carlsberg-like"/>
</dbReference>
<dbReference type="PANTHER" id="PTHR43806:SF11">
    <property type="entry name" value="CEREVISIN-RELATED"/>
    <property type="match status" value="1"/>
</dbReference>
<dbReference type="PANTHER" id="PTHR43806">
    <property type="entry name" value="PEPTIDASE S8"/>
    <property type="match status" value="1"/>
</dbReference>
<dbReference type="Pfam" id="PF05922">
    <property type="entry name" value="Inhibitor_I9"/>
    <property type="match status" value="1"/>
</dbReference>
<dbReference type="Pfam" id="PF00082">
    <property type="entry name" value="Peptidase_S8"/>
    <property type="match status" value="1"/>
</dbReference>
<dbReference type="PRINTS" id="PR00723">
    <property type="entry name" value="SUBTILISIN"/>
</dbReference>
<dbReference type="SUPFAM" id="SSF54897">
    <property type="entry name" value="Protease propeptides/inhibitors"/>
    <property type="match status" value="1"/>
</dbReference>
<dbReference type="SUPFAM" id="SSF52743">
    <property type="entry name" value="Subtilisin-like"/>
    <property type="match status" value="1"/>
</dbReference>
<dbReference type="PROSITE" id="PS51892">
    <property type="entry name" value="SUBTILASE"/>
    <property type="match status" value="1"/>
</dbReference>
<dbReference type="PROSITE" id="PS00136">
    <property type="entry name" value="SUBTILASE_ASP"/>
    <property type="match status" value="1"/>
</dbReference>
<dbReference type="PROSITE" id="PS00137">
    <property type="entry name" value="SUBTILASE_HIS"/>
    <property type="match status" value="1"/>
</dbReference>
<dbReference type="PROSITE" id="PS00138">
    <property type="entry name" value="SUBTILASE_SER"/>
    <property type="match status" value="1"/>
</dbReference>
<feature type="signal peptide" evidence="1">
    <location>
        <begin position="1"/>
        <end position="29"/>
    </location>
</feature>
<feature type="propeptide" id="PRO_0000027183" evidence="5">
    <location>
        <begin position="30"/>
        <end position="106"/>
    </location>
</feature>
<feature type="chain" id="PRO_0000027184" description="Subtilisin amylosacchariticus">
    <location>
        <begin position="107"/>
        <end position="381"/>
    </location>
</feature>
<feature type="domain" description="Inhibitor I9" evidence="2">
    <location>
        <begin position="38"/>
        <end position="103"/>
    </location>
</feature>
<feature type="domain" description="Peptidase S8" evidence="3">
    <location>
        <begin position="111"/>
        <end position="380"/>
    </location>
</feature>
<feature type="active site" description="Charge relay system" evidence="3">
    <location>
        <position position="138"/>
    </location>
</feature>
<feature type="active site" description="Charge relay system" evidence="3">
    <location>
        <position position="170"/>
    </location>
</feature>
<feature type="active site" description="Charge relay system" evidence="3">
    <location>
        <position position="327"/>
    </location>
</feature>
<feature type="binding site" evidence="1">
    <location>
        <position position="108"/>
    </location>
    <ligand>
        <name>Ca(2+)</name>
        <dbReference type="ChEBI" id="CHEBI:29108"/>
        <label>1</label>
    </ligand>
</feature>
<feature type="binding site" evidence="1">
    <location>
        <position position="147"/>
    </location>
    <ligand>
        <name>Ca(2+)</name>
        <dbReference type="ChEBI" id="CHEBI:29108"/>
        <label>1</label>
    </ligand>
</feature>
<feature type="binding site" evidence="1">
    <location>
        <position position="181"/>
    </location>
    <ligand>
        <name>Ca(2+)</name>
        <dbReference type="ChEBI" id="CHEBI:29108"/>
        <label>1</label>
    </ligand>
</feature>
<feature type="binding site" evidence="1">
    <location>
        <position position="183"/>
    </location>
    <ligand>
        <name>Ca(2+)</name>
        <dbReference type="ChEBI" id="CHEBI:29108"/>
        <label>1</label>
    </ligand>
</feature>
<feature type="binding site" evidence="1">
    <location>
        <position position="185"/>
    </location>
    <ligand>
        <name>Ca(2+)</name>
        <dbReference type="ChEBI" id="CHEBI:29108"/>
        <label>1</label>
    </ligand>
</feature>
<feature type="binding site" evidence="1">
    <location>
        <position position="187"/>
    </location>
    <ligand>
        <name>Ca(2+)</name>
        <dbReference type="ChEBI" id="CHEBI:29108"/>
        <label>1</label>
    </ligand>
</feature>
<feature type="binding site" evidence="1">
    <location>
        <position position="275"/>
    </location>
    <ligand>
        <name>Ca(2+)</name>
        <dbReference type="ChEBI" id="CHEBI:29108"/>
        <label>2</label>
    </ligand>
</feature>
<feature type="binding site" evidence="1">
    <location>
        <position position="277"/>
    </location>
    <ligand>
        <name>Ca(2+)</name>
        <dbReference type="ChEBI" id="CHEBI:29108"/>
        <label>2</label>
    </ligand>
</feature>
<feature type="binding site" evidence="1">
    <location>
        <position position="280"/>
    </location>
    <ligand>
        <name>Ca(2+)</name>
        <dbReference type="ChEBI" id="CHEBI:29108"/>
        <label>2</label>
    </ligand>
</feature>
<feature type="sequence conflict" description="In Ref. 2; AA sequence." evidence="4" ref="2">
    <original>S</original>
    <variation>A</variation>
    <location>
        <position position="191"/>
    </location>
</feature>
<feature type="sequence conflict" description="In Ref. 2; AA sequence." evidence="4" ref="2">
    <original>N</original>
    <variation>D</variation>
    <location>
        <position position="365"/>
    </location>
</feature>
<organism>
    <name type="scientific">Bacillus subtilis subsp. amylosacchariticus</name>
    <dbReference type="NCBI Taxonomy" id="1483"/>
    <lineage>
        <taxon>Bacteria</taxon>
        <taxon>Bacillati</taxon>
        <taxon>Bacillota</taxon>
        <taxon>Bacilli</taxon>
        <taxon>Bacillales</taxon>
        <taxon>Bacillaceae</taxon>
        <taxon>Bacillus</taxon>
    </lineage>
</organism>
<name>SUBT_BACSA</name>
<proteinExistence type="evidence at protein level"/>
<protein>
    <recommendedName>
        <fullName>Subtilisin amylosacchariticus</fullName>
        <ecNumber>3.4.21.62</ecNumber>
    </recommendedName>
</protein>
<keyword id="KW-0106">Calcium</keyword>
<keyword id="KW-0903">Direct protein sequencing</keyword>
<keyword id="KW-0378">Hydrolase</keyword>
<keyword id="KW-0479">Metal-binding</keyword>
<keyword id="KW-0645">Protease</keyword>
<keyword id="KW-0964">Secreted</keyword>
<keyword id="KW-0720">Serine protease</keyword>
<keyword id="KW-0732">Signal</keyword>
<keyword id="KW-0749">Sporulation</keyword>
<keyword id="KW-0865">Zymogen</keyword>
<comment type="function">
    <text>Subtilisin is an extracellular alkaline serine protease, it catalyzes the hydrolysis of proteins and peptide amides.</text>
</comment>
<comment type="catalytic activity">
    <reaction>
        <text>Hydrolysis of proteins with broad specificity for peptide bonds, and a preference for a large uncharged residue in P1. Hydrolyzes peptide amides.</text>
        <dbReference type="EC" id="3.4.21.62"/>
    </reaction>
</comment>
<comment type="cofactor">
    <cofactor evidence="1">
        <name>Ca(2+)</name>
        <dbReference type="ChEBI" id="CHEBI:29108"/>
    </cofactor>
    <text evidence="1">Binds 2 calcium ions per subunit.</text>
</comment>
<comment type="subcellular location">
    <subcellularLocation>
        <location>Secreted</location>
    </subcellularLocation>
</comment>
<comment type="miscellaneous">
    <text>Secretion of subtilisin is associated with onset of sporulation, and many mutations which block sporulation at early stages affect expression levels of subtilisin. However, subtilisin is not necessary for normal sporulation.</text>
</comment>
<comment type="similarity">
    <text evidence="4">Belongs to the peptidase S8 family.</text>
</comment>
<accession>P00783</accession>
<gene>
    <name type="primary">apr</name>
</gene>
<evidence type="ECO:0000250" key="1"/>
<evidence type="ECO:0000255" key="2"/>
<evidence type="ECO:0000255" key="3">
    <source>
        <dbReference type="PROSITE-ProRule" id="PRU01240"/>
    </source>
</evidence>
<evidence type="ECO:0000305" key="4"/>
<evidence type="ECO:0000305" key="5">
    <source>
    </source>
</evidence>
<sequence length="381" mass="39467">MRSKKLWISLLFALTLIFTMAFSNMSAQAAGKSSTEKKYIVGFKQTMSAMSSAKKKDVISEKGGKVQKQFKYVNAAAATLDEKAVKELKKDPSVAYVEEDHIAHEYAQSVPYGISQIKAPALHSQGYTGSNVKVAVIDSGIDSSHPDLNVRGGASFVPSETNPYQDGSSHGTHVAGTIAALNNSIGVLGVSPSASLYAVKVLDSTGSGQYSWIINGIEWAISNNMDVINMSLGGPSGSTALKTVVDKAVSSGIVVAAAAGNEGSSGSSSTVGYPAKYPSTIAVGAVNSSNQRASFSSAGSELDVMAPGVSIQSTLPGGTYGAYNGTSMATPHVAGAAALILSKHPTWTNAQVRDRLESTATYLGNSFYYGKGLINVQAAAQ</sequence>